<reference key="1">
    <citation type="journal article" date="2004" name="Nat. Genet.">
        <title>Complete sequencing and characterization of 21,243 full-length human cDNAs.</title>
        <authorList>
            <person name="Ota T."/>
            <person name="Suzuki Y."/>
            <person name="Nishikawa T."/>
            <person name="Otsuki T."/>
            <person name="Sugiyama T."/>
            <person name="Irie R."/>
            <person name="Wakamatsu A."/>
            <person name="Hayashi K."/>
            <person name="Sato H."/>
            <person name="Nagai K."/>
            <person name="Kimura K."/>
            <person name="Makita H."/>
            <person name="Sekine M."/>
            <person name="Obayashi M."/>
            <person name="Nishi T."/>
            <person name="Shibahara T."/>
            <person name="Tanaka T."/>
            <person name="Ishii S."/>
            <person name="Yamamoto J."/>
            <person name="Saito K."/>
            <person name="Kawai Y."/>
            <person name="Isono Y."/>
            <person name="Nakamura Y."/>
            <person name="Nagahari K."/>
            <person name="Murakami K."/>
            <person name="Yasuda T."/>
            <person name="Iwayanagi T."/>
            <person name="Wagatsuma M."/>
            <person name="Shiratori A."/>
            <person name="Sudo H."/>
            <person name="Hosoiri T."/>
            <person name="Kaku Y."/>
            <person name="Kodaira H."/>
            <person name="Kondo H."/>
            <person name="Sugawara M."/>
            <person name="Takahashi M."/>
            <person name="Kanda K."/>
            <person name="Yokoi T."/>
            <person name="Furuya T."/>
            <person name="Kikkawa E."/>
            <person name="Omura Y."/>
            <person name="Abe K."/>
            <person name="Kamihara K."/>
            <person name="Katsuta N."/>
            <person name="Sato K."/>
            <person name="Tanikawa M."/>
            <person name="Yamazaki M."/>
            <person name="Ninomiya K."/>
            <person name="Ishibashi T."/>
            <person name="Yamashita H."/>
            <person name="Murakawa K."/>
            <person name="Fujimori K."/>
            <person name="Tanai H."/>
            <person name="Kimata M."/>
            <person name="Watanabe M."/>
            <person name="Hiraoka S."/>
            <person name="Chiba Y."/>
            <person name="Ishida S."/>
            <person name="Ono Y."/>
            <person name="Takiguchi S."/>
            <person name="Watanabe S."/>
            <person name="Yosida M."/>
            <person name="Hotuta T."/>
            <person name="Kusano J."/>
            <person name="Kanehori K."/>
            <person name="Takahashi-Fujii A."/>
            <person name="Hara H."/>
            <person name="Tanase T.-O."/>
            <person name="Nomura Y."/>
            <person name="Togiya S."/>
            <person name="Komai F."/>
            <person name="Hara R."/>
            <person name="Takeuchi K."/>
            <person name="Arita M."/>
            <person name="Imose N."/>
            <person name="Musashino K."/>
            <person name="Yuuki H."/>
            <person name="Oshima A."/>
            <person name="Sasaki N."/>
            <person name="Aotsuka S."/>
            <person name="Yoshikawa Y."/>
            <person name="Matsunawa H."/>
            <person name="Ichihara T."/>
            <person name="Shiohata N."/>
            <person name="Sano S."/>
            <person name="Moriya S."/>
            <person name="Momiyama H."/>
            <person name="Satoh N."/>
            <person name="Takami S."/>
            <person name="Terashima Y."/>
            <person name="Suzuki O."/>
            <person name="Nakagawa S."/>
            <person name="Senoh A."/>
            <person name="Mizoguchi H."/>
            <person name="Goto Y."/>
            <person name="Shimizu F."/>
            <person name="Wakebe H."/>
            <person name="Hishigaki H."/>
            <person name="Watanabe T."/>
            <person name="Sugiyama A."/>
            <person name="Takemoto M."/>
            <person name="Kawakami B."/>
            <person name="Yamazaki M."/>
            <person name="Watanabe K."/>
            <person name="Kumagai A."/>
            <person name="Itakura S."/>
            <person name="Fukuzumi Y."/>
            <person name="Fujimori Y."/>
            <person name="Komiyama M."/>
            <person name="Tashiro H."/>
            <person name="Tanigami A."/>
            <person name="Fujiwara T."/>
            <person name="Ono T."/>
            <person name="Yamada K."/>
            <person name="Fujii Y."/>
            <person name="Ozaki K."/>
            <person name="Hirao M."/>
            <person name="Ohmori Y."/>
            <person name="Kawabata A."/>
            <person name="Hikiji T."/>
            <person name="Kobatake N."/>
            <person name="Inagaki H."/>
            <person name="Ikema Y."/>
            <person name="Okamoto S."/>
            <person name="Okitani R."/>
            <person name="Kawakami T."/>
            <person name="Noguchi S."/>
            <person name="Itoh T."/>
            <person name="Shigeta K."/>
            <person name="Senba T."/>
            <person name="Matsumura K."/>
            <person name="Nakajima Y."/>
            <person name="Mizuno T."/>
            <person name="Morinaga M."/>
            <person name="Sasaki M."/>
            <person name="Togashi T."/>
            <person name="Oyama M."/>
            <person name="Hata H."/>
            <person name="Watanabe M."/>
            <person name="Komatsu T."/>
            <person name="Mizushima-Sugano J."/>
            <person name="Satoh T."/>
            <person name="Shirai Y."/>
            <person name="Takahashi Y."/>
            <person name="Nakagawa K."/>
            <person name="Okumura K."/>
            <person name="Nagase T."/>
            <person name="Nomura N."/>
            <person name="Kikuchi H."/>
            <person name="Masuho Y."/>
            <person name="Yamashita R."/>
            <person name="Nakai K."/>
            <person name="Yada T."/>
            <person name="Nakamura Y."/>
            <person name="Ohara O."/>
            <person name="Isogai T."/>
            <person name="Sugano S."/>
        </authorList>
    </citation>
    <scope>NUCLEOTIDE SEQUENCE [LARGE SCALE MRNA]</scope>
    <source>
        <tissue>Testis</tissue>
    </source>
</reference>
<reference key="2">
    <citation type="submission" date="2005-07" db="EMBL/GenBank/DDBJ databases">
        <authorList>
            <person name="Mural R.J."/>
            <person name="Istrail S."/>
            <person name="Sutton G.G."/>
            <person name="Florea L."/>
            <person name="Halpern A.L."/>
            <person name="Mobarry C.M."/>
            <person name="Lippert R."/>
            <person name="Walenz B."/>
            <person name="Shatkay H."/>
            <person name="Dew I."/>
            <person name="Miller J.R."/>
            <person name="Flanigan M.J."/>
            <person name="Edwards N.J."/>
            <person name="Bolanos R."/>
            <person name="Fasulo D."/>
            <person name="Halldorsson B.V."/>
            <person name="Hannenhalli S."/>
            <person name="Turner R."/>
            <person name="Yooseph S."/>
            <person name="Lu F."/>
            <person name="Nusskern D.R."/>
            <person name="Shue B.C."/>
            <person name="Zheng X.H."/>
            <person name="Zhong F."/>
            <person name="Delcher A.L."/>
            <person name="Huson D.H."/>
            <person name="Kravitz S.A."/>
            <person name="Mouchard L."/>
            <person name="Reinert K."/>
            <person name="Remington K.A."/>
            <person name="Clark A.G."/>
            <person name="Waterman M.S."/>
            <person name="Eichler E.E."/>
            <person name="Adams M.D."/>
            <person name="Hunkapiller M.W."/>
            <person name="Myers E.W."/>
            <person name="Venter J.C."/>
        </authorList>
    </citation>
    <scope>NUCLEOTIDE SEQUENCE [LARGE SCALE GENOMIC DNA]</scope>
</reference>
<reference key="3">
    <citation type="journal article" date="2004" name="Genome Res.">
        <title>The status, quality, and expansion of the NIH full-length cDNA project: the Mammalian Gene Collection (MGC).</title>
        <authorList>
            <consortium name="The MGC Project Team"/>
        </authorList>
    </citation>
    <scope>NUCLEOTIDE SEQUENCE [LARGE SCALE MRNA]</scope>
    <source>
        <tissue>Testis</tissue>
    </source>
</reference>
<accession>Q8NA97</accession>
<accession>B2RPB9</accession>
<name>FEAS1_HUMAN</name>
<dbReference type="EMBL" id="AK093040">
    <property type="protein sequence ID" value="BAC04029.1"/>
    <property type="molecule type" value="mRNA"/>
</dbReference>
<dbReference type="EMBL" id="CH471060">
    <property type="protein sequence ID" value="EAW92055.1"/>
    <property type="molecule type" value="Genomic_DNA"/>
</dbReference>
<dbReference type="EMBL" id="BC137357">
    <property type="protein sequence ID" value="AAI37358.1"/>
    <property type="molecule type" value="mRNA"/>
</dbReference>
<dbReference type="BioMuta" id="HGNC:26652"/>
<dbReference type="ProteomicsDB" id="72660"/>
<dbReference type="AGR" id="HGNC:26652"/>
<dbReference type="GeneCards" id="FER1L6-AS1"/>
<dbReference type="HGNC" id="HGNC:26652">
    <property type="gene designation" value="FER1L6-AS1"/>
</dbReference>
<dbReference type="neXtProt" id="NX_Q8NA97"/>
<dbReference type="InParanoid" id="Q8NA97"/>
<dbReference type="PAN-GO" id="Q8NA97">
    <property type="GO annotations" value="0 GO annotations based on evolutionary models"/>
</dbReference>
<dbReference type="PathwayCommons" id="Q8NA97"/>
<dbReference type="Pharos" id="Q8NA97">
    <property type="development level" value="Tdark"/>
</dbReference>
<dbReference type="PRO" id="PR:Q8NA97"/>
<dbReference type="Proteomes" id="UP000005640">
    <property type="component" value="Unplaced"/>
</dbReference>
<dbReference type="RNAct" id="Q8NA97">
    <property type="molecule type" value="protein"/>
</dbReference>
<protein>
    <recommendedName>
        <fullName>Putative uncharacterized protein FER1L6-AS1</fullName>
    </recommendedName>
    <alternativeName>
        <fullName>FER1L6 antisense RNA 1</fullName>
    </alternativeName>
    <alternativeName>
        <fullName>FER1L6 antisense gene protein 1</fullName>
    </alternativeName>
</protein>
<organism>
    <name type="scientific">Homo sapiens</name>
    <name type="common">Human</name>
    <dbReference type="NCBI Taxonomy" id="9606"/>
    <lineage>
        <taxon>Eukaryota</taxon>
        <taxon>Metazoa</taxon>
        <taxon>Chordata</taxon>
        <taxon>Craniata</taxon>
        <taxon>Vertebrata</taxon>
        <taxon>Euteleostomi</taxon>
        <taxon>Mammalia</taxon>
        <taxon>Eutheria</taxon>
        <taxon>Euarchontoglires</taxon>
        <taxon>Primates</taxon>
        <taxon>Haplorrhini</taxon>
        <taxon>Catarrhini</taxon>
        <taxon>Hominidae</taxon>
        <taxon>Homo</taxon>
    </lineage>
</organism>
<gene>
    <name type="primary">FER1L6-AS1</name>
    <name type="synonym">C8orf54</name>
</gene>
<feature type="chain" id="PRO_0000271054" description="Putative uncharacterized protein FER1L6-AS1">
    <location>
        <begin position="1"/>
        <end position="138"/>
    </location>
</feature>
<keyword id="KW-1185">Reference proteome</keyword>
<sequence length="138" mass="15156">MDILPYLHMSHGKCPLLVRGKGEMEGEALLSCLAMNSLGEQEACLDLGSKTPSLEISSNNQERPTNREETGIICPERLFIYSSKDSSKRLPGGLCIKNKTTCVPVQLHPSSFPKCQEAIVSPQARVKLLNKIKMDTAL</sequence>
<proteinExistence type="evidence at transcript level"/>